<gene>
    <name type="primary">uppP</name>
    <name type="synonym">bacA</name>
    <name type="ordered locus">rrnAC3219</name>
</gene>
<keyword id="KW-1003">Cell membrane</keyword>
<keyword id="KW-0378">Hydrolase</keyword>
<keyword id="KW-0472">Membrane</keyword>
<keyword id="KW-1185">Reference proteome</keyword>
<keyword id="KW-0812">Transmembrane</keyword>
<keyword id="KW-1133">Transmembrane helix</keyword>
<sequence length="270" mass="27661">MNPILVAILLGLLQGVLEWIPVSSEGGVALASTVVTGVSPAASTRLALFLHAGTAVAATAYYRTEVRTILHSIRQLSRRPFADETADLSFIVIATAATAVTGLPAYMVLDAAVSELEGGLFLALVGGLLVITGLLQRFAAALSLGEREIPDGFDAVLVGVLQGLAILPGVSRSGTTVSALLLRGHEGESSLRLSFLLSIPAALAANVLVLVDDGIPAIEPLPAVVALIVSAVVGYLTVDALVRLVRQVPFWAVCTVFGGLGVVGGLLVAL</sequence>
<comment type="function">
    <text evidence="1">Catalyzes the dephosphorylation of undecaprenyl diphosphate (UPP).</text>
</comment>
<comment type="catalytic activity">
    <reaction>
        <text>di-trans,octa-cis-undecaprenyl diphosphate + H2O = di-trans,octa-cis-undecaprenyl phosphate + phosphate + H(+)</text>
        <dbReference type="Rhea" id="RHEA:28094"/>
        <dbReference type="ChEBI" id="CHEBI:15377"/>
        <dbReference type="ChEBI" id="CHEBI:15378"/>
        <dbReference type="ChEBI" id="CHEBI:43474"/>
        <dbReference type="ChEBI" id="CHEBI:58405"/>
        <dbReference type="ChEBI" id="CHEBI:60392"/>
        <dbReference type="EC" id="3.6.1.27"/>
    </reaction>
</comment>
<comment type="subcellular location">
    <subcellularLocation>
        <location evidence="1">Cell membrane</location>
        <topology evidence="1">Multi-pass membrane protein</topology>
    </subcellularLocation>
</comment>
<comment type="similarity">
    <text evidence="3">Belongs to the UppP family.</text>
</comment>
<proteinExistence type="inferred from homology"/>
<organism>
    <name type="scientific">Haloarcula marismortui (strain ATCC 43049 / DSM 3752 / JCM 8966 / VKM B-1809)</name>
    <name type="common">Halobacterium marismortui</name>
    <dbReference type="NCBI Taxonomy" id="272569"/>
    <lineage>
        <taxon>Archaea</taxon>
        <taxon>Methanobacteriati</taxon>
        <taxon>Methanobacteriota</taxon>
        <taxon>Stenosarchaea group</taxon>
        <taxon>Halobacteria</taxon>
        <taxon>Halobacteriales</taxon>
        <taxon>Haloarculaceae</taxon>
        <taxon>Haloarcula</taxon>
    </lineage>
</organism>
<feature type="chain" id="PRO_0000151249" description="Undecaprenyl-diphosphatase">
    <location>
        <begin position="1"/>
        <end position="270"/>
    </location>
</feature>
<feature type="transmembrane region" description="Helical" evidence="2">
    <location>
        <begin position="88"/>
        <end position="108"/>
    </location>
</feature>
<feature type="transmembrane region" description="Helical" evidence="2">
    <location>
        <begin position="115"/>
        <end position="135"/>
    </location>
</feature>
<feature type="transmembrane region" description="Helical" evidence="2">
    <location>
        <begin position="149"/>
        <end position="169"/>
    </location>
</feature>
<feature type="transmembrane region" description="Helical" evidence="2">
    <location>
        <begin position="191"/>
        <end position="211"/>
    </location>
</feature>
<feature type="transmembrane region" description="Helical" evidence="2">
    <location>
        <begin position="214"/>
        <end position="234"/>
    </location>
</feature>
<feature type="transmembrane region" description="Helical" evidence="2">
    <location>
        <begin position="250"/>
        <end position="270"/>
    </location>
</feature>
<reference key="1">
    <citation type="journal article" date="2004" name="Genome Res.">
        <title>Genome sequence of Haloarcula marismortui: a halophilic archaeon from the Dead Sea.</title>
        <authorList>
            <person name="Baliga N.S."/>
            <person name="Bonneau R."/>
            <person name="Facciotti M.T."/>
            <person name="Pan M."/>
            <person name="Glusman G."/>
            <person name="Deutsch E.W."/>
            <person name="Shannon P."/>
            <person name="Chiu Y."/>
            <person name="Weng R.S."/>
            <person name="Gan R.R."/>
            <person name="Hung P."/>
            <person name="Date S.V."/>
            <person name="Marcotte E."/>
            <person name="Hood L."/>
            <person name="Ng W.V."/>
        </authorList>
    </citation>
    <scope>NUCLEOTIDE SEQUENCE [LARGE SCALE GENOMIC DNA]</scope>
    <source>
        <strain>ATCC 43049 / DSM 3752 / JCM 8966 / VKM B-1809</strain>
    </source>
</reference>
<protein>
    <recommendedName>
        <fullName>Undecaprenyl-diphosphatase</fullName>
        <ecNumber>3.6.1.27</ecNumber>
    </recommendedName>
    <alternativeName>
        <fullName>Undecaprenyl pyrophosphate phosphatase</fullName>
    </alternativeName>
</protein>
<dbReference type="EC" id="3.6.1.27"/>
<dbReference type="EMBL" id="AY596297">
    <property type="protein sequence ID" value="AAV47922.1"/>
    <property type="molecule type" value="Genomic_DNA"/>
</dbReference>
<dbReference type="RefSeq" id="WP_007189186.1">
    <property type="nucleotide sequence ID" value="NZ_CP039138.1"/>
</dbReference>
<dbReference type="SMR" id="Q5UXT1"/>
<dbReference type="STRING" id="272569.rrnAC3219"/>
<dbReference type="PaxDb" id="272569-rrnAC3219"/>
<dbReference type="EnsemblBacteria" id="AAV47922">
    <property type="protein sequence ID" value="AAV47922"/>
    <property type="gene ID" value="rrnAC3219"/>
</dbReference>
<dbReference type="KEGG" id="hma:rrnAC3219"/>
<dbReference type="PATRIC" id="fig|272569.17.peg.3756"/>
<dbReference type="eggNOG" id="arCOG04761">
    <property type="taxonomic scope" value="Archaea"/>
</dbReference>
<dbReference type="HOGENOM" id="CLU_060296_1_2_2"/>
<dbReference type="Proteomes" id="UP000001169">
    <property type="component" value="Chromosome I"/>
</dbReference>
<dbReference type="GO" id="GO:0005886">
    <property type="term" value="C:plasma membrane"/>
    <property type="evidence" value="ECO:0007669"/>
    <property type="project" value="UniProtKB-SubCell"/>
</dbReference>
<dbReference type="GO" id="GO:0050380">
    <property type="term" value="F:undecaprenyl-diphosphatase activity"/>
    <property type="evidence" value="ECO:0007669"/>
    <property type="project" value="UniProtKB-EC"/>
</dbReference>
<dbReference type="InterPro" id="IPR003824">
    <property type="entry name" value="UppP"/>
</dbReference>
<dbReference type="PANTHER" id="PTHR30622">
    <property type="entry name" value="UNDECAPRENYL-DIPHOSPHATASE"/>
    <property type="match status" value="1"/>
</dbReference>
<dbReference type="PANTHER" id="PTHR30622:SF2">
    <property type="entry name" value="UNDECAPRENYL-DIPHOSPHATASE"/>
    <property type="match status" value="1"/>
</dbReference>
<dbReference type="Pfam" id="PF02673">
    <property type="entry name" value="BacA"/>
    <property type="match status" value="1"/>
</dbReference>
<accession>Q5UXT1</accession>
<name>UPPP_HALMA</name>
<evidence type="ECO:0000250" key="1"/>
<evidence type="ECO:0000255" key="2"/>
<evidence type="ECO:0000305" key="3"/>